<gene>
    <name evidence="1" type="primary">dxs</name>
    <name type="ordered locus">RPE_1067</name>
</gene>
<keyword id="KW-0414">Isoprene biosynthesis</keyword>
<keyword id="KW-0460">Magnesium</keyword>
<keyword id="KW-0479">Metal-binding</keyword>
<keyword id="KW-0784">Thiamine biosynthesis</keyword>
<keyword id="KW-0786">Thiamine pyrophosphate</keyword>
<keyword id="KW-0808">Transferase</keyword>
<protein>
    <recommendedName>
        <fullName evidence="1">1-deoxy-D-xylulose-5-phosphate synthase</fullName>
        <ecNumber evidence="1">2.2.1.7</ecNumber>
    </recommendedName>
    <alternativeName>
        <fullName evidence="1">1-deoxyxylulose-5-phosphate synthase</fullName>
        <shortName evidence="1">DXP synthase</shortName>
        <shortName evidence="1">DXPS</shortName>
    </alternativeName>
</protein>
<sequence length="640" mass="68656">MTEFSKTPLLDTIRTPDDLRKLRIDQVQQVADELRLETIDAVSVTGGHFGAGLGVVELTTAIHYVFDTPRDRLIWDVGHQAYPHKILTGRRDRIRTLRTGGGLSGFTKRTESDHDPFGAGHSSTSISAGLGMAVASDLAGTKNNVIAVIGDGSISAGMAYEAMNNAGAMNSRLIVILNDNNMSIAPPVGAMSAYLSRLYSGKTYRSLREAGKQIGKHLPKLIADRAARAEEYSRGFMMGGGTLFEELGFYYVGPIDGHNLDHLLPILQNVRDADAGPFLIHVVTQKGKGYAPAEAAADKYHAVVKFDIATGTQAKTKSNAPSYQNVFGASLVKEAQKDDKIVGITAAMPSGTGIDIFEKAFPKRTFDVGIAEQHAVTFAAGLATEGFKPFCAIYSTFLQRGYDQIVHDVAIQNLPVRFAIDRAGLVGADGATHAGSFDNAYLGCLPNFVIMAASDEAELVHMVATQVAINDAPSAVRYPRGEGRGVEMPEVGIPLEIGKGRVVRQGNKIALLSFGTRLAECEKAADELATLGLSTTVADARFMKPLDVELVLKLAREHEVLITVEEGSIGGFGSHVMQTLAEHGMLDGEVRMRSLVLPDEFMDHDTPAVMYARAGLDAKGIVKKVFEALGKDKAETVKLA</sequence>
<comment type="function">
    <text evidence="1">Catalyzes the acyloin condensation reaction between C atoms 2 and 3 of pyruvate and glyceraldehyde 3-phosphate to yield 1-deoxy-D-xylulose-5-phosphate (DXP).</text>
</comment>
<comment type="catalytic activity">
    <reaction evidence="1">
        <text>D-glyceraldehyde 3-phosphate + pyruvate + H(+) = 1-deoxy-D-xylulose 5-phosphate + CO2</text>
        <dbReference type="Rhea" id="RHEA:12605"/>
        <dbReference type="ChEBI" id="CHEBI:15361"/>
        <dbReference type="ChEBI" id="CHEBI:15378"/>
        <dbReference type="ChEBI" id="CHEBI:16526"/>
        <dbReference type="ChEBI" id="CHEBI:57792"/>
        <dbReference type="ChEBI" id="CHEBI:59776"/>
        <dbReference type="EC" id="2.2.1.7"/>
    </reaction>
</comment>
<comment type="cofactor">
    <cofactor evidence="1">
        <name>Mg(2+)</name>
        <dbReference type="ChEBI" id="CHEBI:18420"/>
    </cofactor>
    <text evidence="1">Binds 1 Mg(2+) ion per subunit.</text>
</comment>
<comment type="cofactor">
    <cofactor evidence="1">
        <name>thiamine diphosphate</name>
        <dbReference type="ChEBI" id="CHEBI:58937"/>
    </cofactor>
    <text evidence="1">Binds 1 thiamine pyrophosphate per subunit.</text>
</comment>
<comment type="pathway">
    <text evidence="1">Metabolic intermediate biosynthesis; 1-deoxy-D-xylulose 5-phosphate biosynthesis; 1-deoxy-D-xylulose 5-phosphate from D-glyceraldehyde 3-phosphate and pyruvate: step 1/1.</text>
</comment>
<comment type="subunit">
    <text evidence="1">Homodimer.</text>
</comment>
<comment type="similarity">
    <text evidence="1">Belongs to the transketolase family. DXPS subfamily.</text>
</comment>
<reference key="1">
    <citation type="submission" date="2006-09" db="EMBL/GenBank/DDBJ databases">
        <title>Complete sequence of Rhodopseudomonas palustris BisA53.</title>
        <authorList>
            <consortium name="US DOE Joint Genome Institute"/>
            <person name="Copeland A."/>
            <person name="Lucas S."/>
            <person name="Lapidus A."/>
            <person name="Barry K."/>
            <person name="Detter J.C."/>
            <person name="Glavina del Rio T."/>
            <person name="Hammon N."/>
            <person name="Israni S."/>
            <person name="Dalin E."/>
            <person name="Tice H."/>
            <person name="Pitluck S."/>
            <person name="Chain P."/>
            <person name="Malfatti S."/>
            <person name="Shin M."/>
            <person name="Vergez L."/>
            <person name="Schmutz J."/>
            <person name="Larimer F."/>
            <person name="Land M."/>
            <person name="Hauser L."/>
            <person name="Pelletier D.A."/>
            <person name="Kyrpides N."/>
            <person name="Kim E."/>
            <person name="Harwood C.S."/>
            <person name="Oda Y."/>
            <person name="Richardson P."/>
        </authorList>
    </citation>
    <scope>NUCLEOTIDE SEQUENCE [LARGE SCALE GENOMIC DNA]</scope>
    <source>
        <strain>BisA53</strain>
    </source>
</reference>
<accession>Q07SR3</accession>
<evidence type="ECO:0000255" key="1">
    <source>
        <dbReference type="HAMAP-Rule" id="MF_00315"/>
    </source>
</evidence>
<dbReference type="EC" id="2.2.1.7" evidence="1"/>
<dbReference type="EMBL" id="CP000463">
    <property type="protein sequence ID" value="ABJ05021.1"/>
    <property type="molecule type" value="Genomic_DNA"/>
</dbReference>
<dbReference type="SMR" id="Q07SR3"/>
<dbReference type="STRING" id="316055.RPE_1067"/>
<dbReference type="KEGG" id="rpe:RPE_1067"/>
<dbReference type="eggNOG" id="COG1154">
    <property type="taxonomic scope" value="Bacteria"/>
</dbReference>
<dbReference type="HOGENOM" id="CLU_009227_1_4_5"/>
<dbReference type="OrthoDB" id="9803371at2"/>
<dbReference type="UniPathway" id="UPA00064">
    <property type="reaction ID" value="UER00091"/>
</dbReference>
<dbReference type="GO" id="GO:0008661">
    <property type="term" value="F:1-deoxy-D-xylulose-5-phosphate synthase activity"/>
    <property type="evidence" value="ECO:0007669"/>
    <property type="project" value="UniProtKB-UniRule"/>
</dbReference>
<dbReference type="GO" id="GO:0000287">
    <property type="term" value="F:magnesium ion binding"/>
    <property type="evidence" value="ECO:0007669"/>
    <property type="project" value="UniProtKB-UniRule"/>
</dbReference>
<dbReference type="GO" id="GO:0030976">
    <property type="term" value="F:thiamine pyrophosphate binding"/>
    <property type="evidence" value="ECO:0007669"/>
    <property type="project" value="UniProtKB-UniRule"/>
</dbReference>
<dbReference type="GO" id="GO:0052865">
    <property type="term" value="P:1-deoxy-D-xylulose 5-phosphate biosynthetic process"/>
    <property type="evidence" value="ECO:0007669"/>
    <property type="project" value="UniProtKB-UniPathway"/>
</dbReference>
<dbReference type="GO" id="GO:0019682">
    <property type="term" value="P:glyceraldehyde-3-phosphate metabolic process"/>
    <property type="evidence" value="ECO:0007669"/>
    <property type="project" value="UniProtKB-ARBA"/>
</dbReference>
<dbReference type="GO" id="GO:0016114">
    <property type="term" value="P:terpenoid biosynthetic process"/>
    <property type="evidence" value="ECO:0007669"/>
    <property type="project" value="UniProtKB-UniRule"/>
</dbReference>
<dbReference type="GO" id="GO:0009228">
    <property type="term" value="P:thiamine biosynthetic process"/>
    <property type="evidence" value="ECO:0007669"/>
    <property type="project" value="UniProtKB-UniRule"/>
</dbReference>
<dbReference type="CDD" id="cd02007">
    <property type="entry name" value="TPP_DXS"/>
    <property type="match status" value="1"/>
</dbReference>
<dbReference type="CDD" id="cd07033">
    <property type="entry name" value="TPP_PYR_DXS_TK_like"/>
    <property type="match status" value="1"/>
</dbReference>
<dbReference type="FunFam" id="3.40.50.920:FF:000002">
    <property type="entry name" value="1-deoxy-D-xylulose-5-phosphate synthase"/>
    <property type="match status" value="1"/>
</dbReference>
<dbReference type="FunFam" id="3.40.50.970:FF:000005">
    <property type="entry name" value="1-deoxy-D-xylulose-5-phosphate synthase"/>
    <property type="match status" value="1"/>
</dbReference>
<dbReference type="Gene3D" id="3.40.50.920">
    <property type="match status" value="1"/>
</dbReference>
<dbReference type="Gene3D" id="3.40.50.970">
    <property type="match status" value="2"/>
</dbReference>
<dbReference type="HAMAP" id="MF_00315">
    <property type="entry name" value="DXP_synth"/>
    <property type="match status" value="1"/>
</dbReference>
<dbReference type="InterPro" id="IPR005477">
    <property type="entry name" value="Dxylulose-5-P_synthase"/>
</dbReference>
<dbReference type="InterPro" id="IPR029061">
    <property type="entry name" value="THDP-binding"/>
</dbReference>
<dbReference type="InterPro" id="IPR009014">
    <property type="entry name" value="Transketo_C/PFOR_II"/>
</dbReference>
<dbReference type="InterPro" id="IPR005475">
    <property type="entry name" value="Transketolase-like_Pyr-bd"/>
</dbReference>
<dbReference type="InterPro" id="IPR020826">
    <property type="entry name" value="Transketolase_BS"/>
</dbReference>
<dbReference type="InterPro" id="IPR033248">
    <property type="entry name" value="Transketolase_C"/>
</dbReference>
<dbReference type="InterPro" id="IPR049557">
    <property type="entry name" value="Transketolase_CS"/>
</dbReference>
<dbReference type="NCBIfam" id="TIGR00204">
    <property type="entry name" value="dxs"/>
    <property type="match status" value="1"/>
</dbReference>
<dbReference type="NCBIfam" id="NF003933">
    <property type="entry name" value="PRK05444.2-2"/>
    <property type="match status" value="1"/>
</dbReference>
<dbReference type="PANTHER" id="PTHR43322">
    <property type="entry name" value="1-D-DEOXYXYLULOSE 5-PHOSPHATE SYNTHASE-RELATED"/>
    <property type="match status" value="1"/>
</dbReference>
<dbReference type="PANTHER" id="PTHR43322:SF5">
    <property type="entry name" value="1-DEOXY-D-XYLULOSE-5-PHOSPHATE SYNTHASE, CHLOROPLASTIC"/>
    <property type="match status" value="1"/>
</dbReference>
<dbReference type="Pfam" id="PF13292">
    <property type="entry name" value="DXP_synthase_N"/>
    <property type="match status" value="1"/>
</dbReference>
<dbReference type="Pfam" id="PF02779">
    <property type="entry name" value="Transket_pyr"/>
    <property type="match status" value="1"/>
</dbReference>
<dbReference type="Pfam" id="PF02780">
    <property type="entry name" value="Transketolase_C"/>
    <property type="match status" value="1"/>
</dbReference>
<dbReference type="SMART" id="SM00861">
    <property type="entry name" value="Transket_pyr"/>
    <property type="match status" value="1"/>
</dbReference>
<dbReference type="SUPFAM" id="SSF52518">
    <property type="entry name" value="Thiamin diphosphate-binding fold (THDP-binding)"/>
    <property type="match status" value="2"/>
</dbReference>
<dbReference type="SUPFAM" id="SSF52922">
    <property type="entry name" value="TK C-terminal domain-like"/>
    <property type="match status" value="1"/>
</dbReference>
<dbReference type="PROSITE" id="PS00801">
    <property type="entry name" value="TRANSKETOLASE_1"/>
    <property type="match status" value="1"/>
</dbReference>
<dbReference type="PROSITE" id="PS00802">
    <property type="entry name" value="TRANSKETOLASE_2"/>
    <property type="match status" value="1"/>
</dbReference>
<feature type="chain" id="PRO_1000019069" description="1-deoxy-D-xylulose-5-phosphate synthase">
    <location>
        <begin position="1"/>
        <end position="640"/>
    </location>
</feature>
<feature type="binding site" evidence="1">
    <location>
        <position position="79"/>
    </location>
    <ligand>
        <name>thiamine diphosphate</name>
        <dbReference type="ChEBI" id="CHEBI:58937"/>
    </ligand>
</feature>
<feature type="binding site" evidence="1">
    <location>
        <begin position="120"/>
        <end position="122"/>
    </location>
    <ligand>
        <name>thiamine diphosphate</name>
        <dbReference type="ChEBI" id="CHEBI:58937"/>
    </ligand>
</feature>
<feature type="binding site" evidence="1">
    <location>
        <position position="151"/>
    </location>
    <ligand>
        <name>Mg(2+)</name>
        <dbReference type="ChEBI" id="CHEBI:18420"/>
    </ligand>
</feature>
<feature type="binding site" evidence="1">
    <location>
        <begin position="152"/>
        <end position="153"/>
    </location>
    <ligand>
        <name>thiamine diphosphate</name>
        <dbReference type="ChEBI" id="CHEBI:58937"/>
    </ligand>
</feature>
<feature type="binding site" evidence="1">
    <location>
        <position position="180"/>
    </location>
    <ligand>
        <name>Mg(2+)</name>
        <dbReference type="ChEBI" id="CHEBI:18420"/>
    </ligand>
</feature>
<feature type="binding site" evidence="1">
    <location>
        <position position="180"/>
    </location>
    <ligand>
        <name>thiamine diphosphate</name>
        <dbReference type="ChEBI" id="CHEBI:58937"/>
    </ligand>
</feature>
<feature type="binding site" evidence="1">
    <location>
        <position position="290"/>
    </location>
    <ligand>
        <name>thiamine diphosphate</name>
        <dbReference type="ChEBI" id="CHEBI:58937"/>
    </ligand>
</feature>
<feature type="binding site" evidence="1">
    <location>
        <position position="372"/>
    </location>
    <ligand>
        <name>thiamine diphosphate</name>
        <dbReference type="ChEBI" id="CHEBI:58937"/>
    </ligand>
</feature>
<proteinExistence type="inferred from homology"/>
<name>DXS_RHOP5</name>
<organism>
    <name type="scientific">Rhodopseudomonas palustris (strain BisA53)</name>
    <dbReference type="NCBI Taxonomy" id="316055"/>
    <lineage>
        <taxon>Bacteria</taxon>
        <taxon>Pseudomonadati</taxon>
        <taxon>Pseudomonadota</taxon>
        <taxon>Alphaproteobacteria</taxon>
        <taxon>Hyphomicrobiales</taxon>
        <taxon>Nitrobacteraceae</taxon>
        <taxon>Rhodopseudomonas</taxon>
    </lineage>
</organism>